<gene>
    <name evidence="1" type="primary">pth</name>
    <name type="ordered locus">MT1042</name>
</gene>
<comment type="function">
    <text evidence="1">Hydrolyzes ribosome-free peptidyl-tRNAs (with 1 or more amino acids incorporated), which drop off the ribosome during protein synthesis, or as a result of ribosome stalling.</text>
</comment>
<comment type="function">
    <text evidence="1">Catalyzes the release of premature peptidyl moieties from peptidyl-tRNA molecules trapped in stalled 50S ribosomal subunits, and thus maintains levels of free tRNAs and 50S ribosomes.</text>
</comment>
<comment type="catalytic activity">
    <reaction evidence="1">
        <text>an N-acyl-L-alpha-aminoacyl-tRNA + H2O = an N-acyl-L-amino acid + a tRNA + H(+)</text>
        <dbReference type="Rhea" id="RHEA:54448"/>
        <dbReference type="Rhea" id="RHEA-COMP:10123"/>
        <dbReference type="Rhea" id="RHEA-COMP:13883"/>
        <dbReference type="ChEBI" id="CHEBI:15377"/>
        <dbReference type="ChEBI" id="CHEBI:15378"/>
        <dbReference type="ChEBI" id="CHEBI:59874"/>
        <dbReference type="ChEBI" id="CHEBI:78442"/>
        <dbReference type="ChEBI" id="CHEBI:138191"/>
        <dbReference type="EC" id="3.1.1.29"/>
    </reaction>
</comment>
<comment type="subunit">
    <text evidence="1">Monomer.</text>
</comment>
<comment type="subcellular location">
    <subcellularLocation>
        <location evidence="1">Cytoplasm</location>
    </subcellularLocation>
</comment>
<comment type="similarity">
    <text evidence="1">Belongs to the PTH family.</text>
</comment>
<reference key="1">
    <citation type="journal article" date="2002" name="J. Bacteriol.">
        <title>Whole-genome comparison of Mycobacterium tuberculosis clinical and laboratory strains.</title>
        <authorList>
            <person name="Fleischmann R.D."/>
            <person name="Alland D."/>
            <person name="Eisen J.A."/>
            <person name="Carpenter L."/>
            <person name="White O."/>
            <person name="Peterson J.D."/>
            <person name="DeBoy R.T."/>
            <person name="Dodson R.J."/>
            <person name="Gwinn M.L."/>
            <person name="Haft D.H."/>
            <person name="Hickey E.K."/>
            <person name="Kolonay J.F."/>
            <person name="Nelson W.C."/>
            <person name="Umayam L.A."/>
            <person name="Ermolaeva M.D."/>
            <person name="Salzberg S.L."/>
            <person name="Delcher A."/>
            <person name="Utterback T.R."/>
            <person name="Weidman J.F."/>
            <person name="Khouri H.M."/>
            <person name="Gill J."/>
            <person name="Mikula A."/>
            <person name="Bishai W."/>
            <person name="Jacobs W.R. Jr."/>
            <person name="Venter J.C."/>
            <person name="Fraser C.M."/>
        </authorList>
    </citation>
    <scope>NUCLEOTIDE SEQUENCE [LARGE SCALE GENOMIC DNA]</scope>
    <source>
        <strain>CDC 1551 / Oshkosh</strain>
    </source>
</reference>
<organism>
    <name type="scientific">Mycobacterium tuberculosis (strain CDC 1551 / Oshkosh)</name>
    <dbReference type="NCBI Taxonomy" id="83331"/>
    <lineage>
        <taxon>Bacteria</taxon>
        <taxon>Bacillati</taxon>
        <taxon>Actinomycetota</taxon>
        <taxon>Actinomycetes</taxon>
        <taxon>Mycobacteriales</taxon>
        <taxon>Mycobacteriaceae</taxon>
        <taxon>Mycobacterium</taxon>
        <taxon>Mycobacterium tuberculosis complex</taxon>
    </lineage>
</organism>
<feature type="chain" id="PRO_0000428153" description="Peptidyl-tRNA hydrolase">
    <location>
        <begin position="1"/>
        <end position="191"/>
    </location>
</feature>
<feature type="active site" description="Proton acceptor" evidence="1">
    <location>
        <position position="22"/>
    </location>
</feature>
<feature type="binding site" evidence="1">
    <location>
        <position position="17"/>
    </location>
    <ligand>
        <name>tRNA</name>
        <dbReference type="ChEBI" id="CHEBI:17843"/>
    </ligand>
</feature>
<feature type="binding site" evidence="1">
    <location>
        <position position="68"/>
    </location>
    <ligand>
        <name>tRNA</name>
        <dbReference type="ChEBI" id="CHEBI:17843"/>
    </ligand>
</feature>
<feature type="binding site" evidence="1">
    <location>
        <position position="70"/>
    </location>
    <ligand>
        <name>tRNA</name>
        <dbReference type="ChEBI" id="CHEBI:17843"/>
    </ligand>
</feature>
<feature type="binding site" evidence="1">
    <location>
        <position position="116"/>
    </location>
    <ligand>
        <name>tRNA</name>
        <dbReference type="ChEBI" id="CHEBI:17843"/>
    </ligand>
</feature>
<feature type="site" description="Discriminates between blocked and unblocked aminoacyl-tRNA" evidence="1">
    <location>
        <position position="12"/>
    </location>
</feature>
<feature type="site" description="Stabilizes the basic form of H active site to accept a proton" evidence="1">
    <location>
        <position position="95"/>
    </location>
</feature>
<name>PTH_MYCTO</name>
<proteinExistence type="inferred from homology"/>
<dbReference type="EC" id="3.1.1.29" evidence="1"/>
<dbReference type="EMBL" id="AE000516">
    <property type="protein sequence ID" value="AAK45293.1"/>
    <property type="molecule type" value="Genomic_DNA"/>
</dbReference>
<dbReference type="PIR" id="A70622">
    <property type="entry name" value="A70622"/>
</dbReference>
<dbReference type="RefSeq" id="WP_003405251.1">
    <property type="nucleotide sequence ID" value="NZ_KK341227.1"/>
</dbReference>
<dbReference type="BMRB" id="P9WHN6"/>
<dbReference type="SMR" id="P9WHN6"/>
<dbReference type="GeneID" id="45424985"/>
<dbReference type="KEGG" id="mtc:MT1042"/>
<dbReference type="PATRIC" id="fig|83331.31.peg.1117"/>
<dbReference type="HOGENOM" id="CLU_062456_2_2_11"/>
<dbReference type="Proteomes" id="UP000001020">
    <property type="component" value="Chromosome"/>
</dbReference>
<dbReference type="GO" id="GO:0005737">
    <property type="term" value="C:cytoplasm"/>
    <property type="evidence" value="ECO:0007669"/>
    <property type="project" value="UniProtKB-SubCell"/>
</dbReference>
<dbReference type="GO" id="GO:0004045">
    <property type="term" value="F:peptidyl-tRNA hydrolase activity"/>
    <property type="evidence" value="ECO:0007669"/>
    <property type="project" value="UniProtKB-UniRule"/>
</dbReference>
<dbReference type="GO" id="GO:0000049">
    <property type="term" value="F:tRNA binding"/>
    <property type="evidence" value="ECO:0007669"/>
    <property type="project" value="UniProtKB-UniRule"/>
</dbReference>
<dbReference type="GO" id="GO:0006515">
    <property type="term" value="P:protein quality control for misfolded or incompletely synthesized proteins"/>
    <property type="evidence" value="ECO:0007669"/>
    <property type="project" value="UniProtKB-UniRule"/>
</dbReference>
<dbReference type="GO" id="GO:0072344">
    <property type="term" value="P:rescue of stalled ribosome"/>
    <property type="evidence" value="ECO:0007669"/>
    <property type="project" value="UniProtKB-UniRule"/>
</dbReference>
<dbReference type="CDD" id="cd00462">
    <property type="entry name" value="PTH"/>
    <property type="match status" value="1"/>
</dbReference>
<dbReference type="FunFam" id="3.40.50.1470:FF:000001">
    <property type="entry name" value="Peptidyl-tRNA hydrolase"/>
    <property type="match status" value="1"/>
</dbReference>
<dbReference type="Gene3D" id="3.40.50.1470">
    <property type="entry name" value="Peptidyl-tRNA hydrolase"/>
    <property type="match status" value="1"/>
</dbReference>
<dbReference type="HAMAP" id="MF_00083">
    <property type="entry name" value="Pept_tRNA_hydro_bact"/>
    <property type="match status" value="1"/>
</dbReference>
<dbReference type="InterPro" id="IPR001328">
    <property type="entry name" value="Pept_tRNA_hydro"/>
</dbReference>
<dbReference type="InterPro" id="IPR018171">
    <property type="entry name" value="Pept_tRNA_hydro_CS"/>
</dbReference>
<dbReference type="InterPro" id="IPR036416">
    <property type="entry name" value="Pept_tRNA_hydro_sf"/>
</dbReference>
<dbReference type="NCBIfam" id="TIGR00447">
    <property type="entry name" value="pth"/>
    <property type="match status" value="1"/>
</dbReference>
<dbReference type="PANTHER" id="PTHR17224">
    <property type="entry name" value="PEPTIDYL-TRNA HYDROLASE"/>
    <property type="match status" value="1"/>
</dbReference>
<dbReference type="PANTHER" id="PTHR17224:SF1">
    <property type="entry name" value="PEPTIDYL-TRNA HYDROLASE"/>
    <property type="match status" value="1"/>
</dbReference>
<dbReference type="Pfam" id="PF01195">
    <property type="entry name" value="Pept_tRNA_hydro"/>
    <property type="match status" value="1"/>
</dbReference>
<dbReference type="SUPFAM" id="SSF53178">
    <property type="entry name" value="Peptidyl-tRNA hydrolase-like"/>
    <property type="match status" value="1"/>
</dbReference>
<dbReference type="PROSITE" id="PS01195">
    <property type="entry name" value="PEPT_TRNA_HYDROL_1"/>
    <property type="match status" value="1"/>
</dbReference>
<dbReference type="PROSITE" id="PS01196">
    <property type="entry name" value="PEPT_TRNA_HYDROL_2"/>
    <property type="match status" value="1"/>
</dbReference>
<sequence>MAEPLLVVGLGNPGANYARTRHNLGFVVADLLAARLGAKFKAHKRSGAEVATGRSAGRSLVLAKPRCYMNESGRQIGPLAKFYSVAPANIIVIHDDLDLEFGRIRLKIGGGEGGHNGLRSVVAALGTKDFQRVRIGIGRPPGRKDPAAFVLENFTPAERAEVPTICEQAADATELLIEQGMEPAQNRVHAW</sequence>
<evidence type="ECO:0000255" key="1">
    <source>
        <dbReference type="HAMAP-Rule" id="MF_00083"/>
    </source>
</evidence>
<accession>P9WHN6</accession>
<accession>L0T723</accession>
<accession>P65865</accession>
<accession>P96386</accession>
<keyword id="KW-0963">Cytoplasm</keyword>
<keyword id="KW-0378">Hydrolase</keyword>
<keyword id="KW-1185">Reference proteome</keyword>
<keyword id="KW-0694">RNA-binding</keyword>
<keyword id="KW-0820">tRNA-binding</keyword>
<protein>
    <recommendedName>
        <fullName evidence="1">Peptidyl-tRNA hydrolase</fullName>
        <shortName evidence="1">Pth</shortName>
        <ecNumber evidence="1">3.1.1.29</ecNumber>
    </recommendedName>
</protein>